<organism>
    <name type="scientific">Pyricularia oryzae (strain 70-15 / ATCC MYA-4617 / FGSC 8958)</name>
    <name type="common">Rice blast fungus</name>
    <name type="synonym">Magnaporthe oryzae</name>
    <dbReference type="NCBI Taxonomy" id="242507"/>
    <lineage>
        <taxon>Eukaryota</taxon>
        <taxon>Fungi</taxon>
        <taxon>Dikarya</taxon>
        <taxon>Ascomycota</taxon>
        <taxon>Pezizomycotina</taxon>
        <taxon>Sordariomycetes</taxon>
        <taxon>Sordariomycetidae</taxon>
        <taxon>Magnaporthales</taxon>
        <taxon>Pyriculariaceae</taxon>
        <taxon>Pyricularia</taxon>
    </lineage>
</organism>
<reference key="1">
    <citation type="journal article" date="2005" name="Nature">
        <title>The genome sequence of the rice blast fungus Magnaporthe grisea.</title>
        <authorList>
            <person name="Dean R.A."/>
            <person name="Talbot N.J."/>
            <person name="Ebbole D.J."/>
            <person name="Farman M.L."/>
            <person name="Mitchell T.K."/>
            <person name="Orbach M.J."/>
            <person name="Thon M.R."/>
            <person name="Kulkarni R."/>
            <person name="Xu J.-R."/>
            <person name="Pan H."/>
            <person name="Read N.D."/>
            <person name="Lee Y.-H."/>
            <person name="Carbone I."/>
            <person name="Brown D."/>
            <person name="Oh Y.Y."/>
            <person name="Donofrio N."/>
            <person name="Jeong J.S."/>
            <person name="Soanes D.M."/>
            <person name="Djonovic S."/>
            <person name="Kolomiets E."/>
            <person name="Rehmeyer C."/>
            <person name="Li W."/>
            <person name="Harding M."/>
            <person name="Kim S."/>
            <person name="Lebrun M.-H."/>
            <person name="Bohnert H."/>
            <person name="Coughlan S."/>
            <person name="Butler J."/>
            <person name="Calvo S.E."/>
            <person name="Ma L.-J."/>
            <person name="Nicol R."/>
            <person name="Purcell S."/>
            <person name="Nusbaum C."/>
            <person name="Galagan J.E."/>
            <person name="Birren B.W."/>
        </authorList>
    </citation>
    <scope>NUCLEOTIDE SEQUENCE [LARGE SCALE GENOMIC DNA]</scope>
    <source>
        <strain>70-15 / ATCC MYA-4617 / FGSC 8958</strain>
    </source>
</reference>
<name>CLF1_PYRO7</name>
<keyword id="KW-0507">mRNA processing</keyword>
<keyword id="KW-0508">mRNA splicing</keyword>
<keyword id="KW-0539">Nucleus</keyword>
<keyword id="KW-1185">Reference proteome</keyword>
<keyword id="KW-0677">Repeat</keyword>
<keyword id="KW-0747">Spliceosome</keyword>
<feature type="chain" id="PRO_0000205747" description="Pre-mRNA-splicing factor CLF1">
    <location>
        <begin position="1"/>
        <end position="691"/>
    </location>
</feature>
<feature type="repeat" description="HAT 1">
    <location>
        <begin position="52"/>
        <end position="84"/>
    </location>
</feature>
<feature type="repeat" description="HAT 2">
    <location>
        <begin position="86"/>
        <end position="118"/>
    </location>
</feature>
<feature type="repeat" description="HAT 3">
    <location>
        <begin position="120"/>
        <end position="152"/>
    </location>
</feature>
<feature type="repeat" description="HAT 4">
    <location>
        <begin position="154"/>
        <end position="185"/>
    </location>
</feature>
<feature type="repeat" description="HAT 5">
    <location>
        <begin position="187"/>
        <end position="218"/>
    </location>
</feature>
<feature type="repeat" description="HAT 6">
    <location>
        <begin position="220"/>
        <end position="258"/>
    </location>
</feature>
<feature type="repeat" description="HAT 7">
    <location>
        <begin position="260"/>
        <end position="294"/>
    </location>
</feature>
<feature type="repeat" description="HAT 8">
    <location>
        <begin position="304"/>
        <end position="336"/>
    </location>
</feature>
<feature type="repeat" description="HAT 9">
    <location>
        <begin position="338"/>
        <end position="372"/>
    </location>
</feature>
<feature type="repeat" description="HAT 10">
    <location>
        <begin position="382"/>
        <end position="418"/>
    </location>
</feature>
<feature type="repeat" description="HAT 11">
    <location>
        <begin position="420"/>
        <end position="451"/>
    </location>
</feature>
<feature type="repeat" description="HAT 12">
    <location>
        <begin position="453"/>
        <end position="485"/>
    </location>
</feature>
<feature type="repeat" description="HAT 13">
    <location>
        <begin position="487"/>
        <end position="521"/>
    </location>
</feature>
<feature type="repeat" description="HAT 14">
    <location>
        <begin position="523"/>
        <end position="554"/>
    </location>
</feature>
<feature type="repeat" description="HAT 15">
    <location>
        <begin position="574"/>
        <end position="612"/>
    </location>
</feature>
<feature type="repeat" description="HAT 16">
    <location>
        <begin position="617"/>
        <end position="650"/>
    </location>
</feature>
<protein>
    <recommendedName>
        <fullName>Pre-mRNA-splicing factor CLF1</fullName>
    </recommendedName>
</protein>
<comment type="function">
    <text evidence="1">Involved in pre-mRNA splicing and cell cycle progression. Required for the spliceosome assembly and initiation of the DNA replication (By similarity).</text>
</comment>
<comment type="subunit">
    <text evidence="1">Associated with the spliceosome.</text>
</comment>
<comment type="subcellular location">
    <subcellularLocation>
        <location evidence="1">Nucleus</location>
    </subcellularLocation>
</comment>
<comment type="similarity">
    <text evidence="2">Belongs to the crooked-neck family.</text>
</comment>
<accession>Q527H0</accession>
<accession>A4RQ48</accession>
<accession>G4MPG7</accession>
<sequence>MEASRGPPRVKNKAAAPVQISAEQLLREATDRQEEALQKPTQRFEDLEELHEYQGRKRKEFESYCQRSGFNLKNWLQYAQWELEQKEYARSRSVFERALNLHANKVTLWIRYVEAELKSRNINFARNLLDRAVTHLPRVDKLWYKYVWVEEMLGNIPGVRQVFERWMEWQPDEAAWSAFIKLEQRYGEYDRAREIFTRFTMVHPEPRNWIKWSKFEEEYGTSDRVREVFERAIEELSKYGDEFVEERLFIAYARYEAKLHDLDRARAIYKFGLENLPRSKAMLLHKEYTTFEKQYGDREGVEDVVLSKRRRHYEDLVRENPKNYDVWFDYARLEEASGDIDRTREVYEKAIAQVPPTQAKRHWRRYIYLWIFFALWEETEAKNPERARQVYDTCLKLIPHRTFTFAKVWMHKAHFEIRQGDLAAARKTLGRAIGMCPKDRLFKGYIEMEQKLYEFGRCRILYEKHIAYNPANCSTWVKWAELERGLDDLDRARAILDMGIAQPVLDMPEVVWKSYIDFEEEEGEYDKTRSLYERLLDKADHPKVWISYAQFEINIPEEAGEGADEEQEQPVSDEAKARARRVFERAHQGFKDKEMKAERVSILNAWLVFEKTHGSAEDIEKIEKQMPRRTKKKRKLDDDTWEEYVDYIFPADEQVGKNLMNMMAKARARKQAEAEAAAKAAAADDGGESGE</sequence>
<dbReference type="EMBL" id="CM001231">
    <property type="protein sequence ID" value="EHA58010.1"/>
    <property type="molecule type" value="Genomic_DNA"/>
</dbReference>
<dbReference type="RefSeq" id="XP_003710622.1">
    <property type="nucleotide sequence ID" value="XM_003710574.1"/>
</dbReference>
<dbReference type="SMR" id="Q527H0"/>
<dbReference type="FunCoup" id="Q527H0">
    <property type="interactions" value="1046"/>
</dbReference>
<dbReference type="STRING" id="242507.Q527H0"/>
<dbReference type="EnsemblFungi" id="MGG_05720T0">
    <property type="protein sequence ID" value="MGG_05720T0"/>
    <property type="gene ID" value="MGG_05720"/>
</dbReference>
<dbReference type="GeneID" id="2675972"/>
<dbReference type="KEGG" id="mgr:MGG_05720"/>
<dbReference type="VEuPathDB" id="FungiDB:MGG_05720"/>
<dbReference type="eggNOG" id="KOG1915">
    <property type="taxonomic scope" value="Eukaryota"/>
</dbReference>
<dbReference type="HOGENOM" id="CLU_011554_1_0_1"/>
<dbReference type="InParanoid" id="Q527H0"/>
<dbReference type="OMA" id="HIKVWIS"/>
<dbReference type="OrthoDB" id="541719at2759"/>
<dbReference type="Proteomes" id="UP000009058">
    <property type="component" value="Chromosome 1"/>
</dbReference>
<dbReference type="GO" id="GO:0071014">
    <property type="term" value="C:post-mRNA release spliceosomal complex"/>
    <property type="evidence" value="ECO:0007669"/>
    <property type="project" value="TreeGrafter"/>
</dbReference>
<dbReference type="GO" id="GO:0071011">
    <property type="term" value="C:precatalytic spliceosome"/>
    <property type="evidence" value="ECO:0007669"/>
    <property type="project" value="TreeGrafter"/>
</dbReference>
<dbReference type="GO" id="GO:0000974">
    <property type="term" value="C:Prp19 complex"/>
    <property type="evidence" value="ECO:0007669"/>
    <property type="project" value="TreeGrafter"/>
</dbReference>
<dbReference type="GO" id="GO:0071007">
    <property type="term" value="C:U2-type catalytic step 2 spliceosome"/>
    <property type="evidence" value="ECO:0007669"/>
    <property type="project" value="TreeGrafter"/>
</dbReference>
<dbReference type="GO" id="GO:0000245">
    <property type="term" value="P:spliceosomal complex assembly"/>
    <property type="evidence" value="ECO:0007669"/>
    <property type="project" value="TreeGrafter"/>
</dbReference>
<dbReference type="FunFam" id="1.25.40.10:FF:000048">
    <property type="entry name" value="Cell cycle control protein"/>
    <property type="match status" value="1"/>
</dbReference>
<dbReference type="FunFam" id="1.25.40.10:FF:000306">
    <property type="entry name" value="Cell cycle control protein cwf4"/>
    <property type="match status" value="1"/>
</dbReference>
<dbReference type="FunFam" id="1.25.40.10:FF:000269">
    <property type="entry name" value="Crooked neck pre-mRNA-splicing factor 1"/>
    <property type="match status" value="1"/>
</dbReference>
<dbReference type="Gene3D" id="1.25.40.10">
    <property type="entry name" value="Tetratricopeptide repeat domain"/>
    <property type="match status" value="4"/>
</dbReference>
<dbReference type="InterPro" id="IPR003107">
    <property type="entry name" value="HAT"/>
</dbReference>
<dbReference type="InterPro" id="IPR055433">
    <property type="entry name" value="HAT_Syf1-like_N"/>
</dbReference>
<dbReference type="InterPro" id="IPR055430">
    <property type="entry name" value="HAT_Syf1_CNRKL1_C"/>
</dbReference>
<dbReference type="InterPro" id="IPR045075">
    <property type="entry name" value="Syf1-like"/>
</dbReference>
<dbReference type="InterPro" id="IPR011990">
    <property type="entry name" value="TPR-like_helical_dom_sf"/>
</dbReference>
<dbReference type="PANTHER" id="PTHR11246:SF3">
    <property type="entry name" value="CROOKED NECK-LIKE PROTEIN 1"/>
    <property type="match status" value="1"/>
</dbReference>
<dbReference type="PANTHER" id="PTHR11246">
    <property type="entry name" value="PRE-MRNA SPLICING FACTOR"/>
    <property type="match status" value="1"/>
</dbReference>
<dbReference type="Pfam" id="PF23241">
    <property type="entry name" value="HAT_PRP39_C"/>
    <property type="match status" value="1"/>
</dbReference>
<dbReference type="Pfam" id="PF23231">
    <property type="entry name" value="HAT_Syf1_CNRKL1_C"/>
    <property type="match status" value="2"/>
</dbReference>
<dbReference type="Pfam" id="PF23233">
    <property type="entry name" value="HAT_Syf1_CNRKL1_N"/>
    <property type="match status" value="1"/>
</dbReference>
<dbReference type="SMART" id="SM00386">
    <property type="entry name" value="HAT"/>
    <property type="match status" value="15"/>
</dbReference>
<dbReference type="SUPFAM" id="SSF48452">
    <property type="entry name" value="TPR-like"/>
    <property type="match status" value="4"/>
</dbReference>
<gene>
    <name type="primary">CLF1</name>
    <name type="ORF">MGG_05720</name>
</gene>
<proteinExistence type="inferred from homology"/>
<evidence type="ECO:0000250" key="1"/>
<evidence type="ECO:0000305" key="2"/>